<organism>
    <name type="scientific">Streptococcus pneumoniae (strain Hungary19A-6)</name>
    <dbReference type="NCBI Taxonomy" id="487214"/>
    <lineage>
        <taxon>Bacteria</taxon>
        <taxon>Bacillati</taxon>
        <taxon>Bacillota</taxon>
        <taxon>Bacilli</taxon>
        <taxon>Lactobacillales</taxon>
        <taxon>Streptococcaceae</taxon>
        <taxon>Streptococcus</taxon>
    </lineage>
</organism>
<proteinExistence type="inferred from homology"/>
<keyword id="KW-0963">Cytoplasm</keyword>
<keyword id="KW-0312">Gluconeogenesis</keyword>
<keyword id="KW-0324">Glycolysis</keyword>
<keyword id="KW-0413">Isomerase</keyword>
<sequence length="449" mass="49878">MSHIKFDYSKVLDKFVAPHEVEYMQSQVTAADELIRKGTGAGSDFLGWLDLPEKYDREEFDRILKAAEQIKSDSDVLVVIGIGGSYLGAKAAIDFLNHHFANLQTKEERKAPQILYAGNSISSTYLADLVEYVADKDFSVNVISKSGTTTEPAIAFRVFKELLVKKYGQEEANKRIYATTDRQKGAVKVEADANGWGTFVVPDDIGGRFSVLTAVGLLPIAASGADIKALMEGANAARKDYTSDKISENEAYQYAAVRNILYRKGYATEILVNYEPSLQYFSEWWKQLAGESEGKDQKGIYPTSANFSTDLHSLGQFIQEGTRIMFETVVRVDKPRKNVLIPTLEEDLDGLGYLQGKDVDFVNKKATDGVLLAHTDGDVPNMYVTLPEQDAFTLGYTIYFFELAIALSGYLNAINPFDQPGVEAYKRNMFALLGKPGFEELSKELNARL</sequence>
<protein>
    <recommendedName>
        <fullName evidence="1">Glucose-6-phosphate isomerase</fullName>
        <shortName evidence="1">GPI</shortName>
        <ecNumber evidence="1">5.3.1.9</ecNumber>
    </recommendedName>
    <alternativeName>
        <fullName evidence="1">Phosphoglucose isomerase</fullName>
        <shortName evidence="1">PGI</shortName>
    </alternativeName>
    <alternativeName>
        <fullName evidence="1">Phosphohexose isomerase</fullName>
        <shortName evidence="1">PHI</shortName>
    </alternativeName>
</protein>
<feature type="chain" id="PRO_1000125766" description="Glucose-6-phosphate isomerase">
    <location>
        <begin position="1"/>
        <end position="449"/>
    </location>
</feature>
<feature type="active site" description="Proton donor" evidence="1">
    <location>
        <position position="291"/>
    </location>
</feature>
<feature type="active site" evidence="1">
    <location>
        <position position="312"/>
    </location>
</feature>
<feature type="active site" evidence="1">
    <location>
        <position position="426"/>
    </location>
</feature>
<gene>
    <name evidence="1" type="primary">pgi</name>
    <name type="ordered locus">SPH_2257</name>
</gene>
<name>G6PI_STRPI</name>
<reference key="1">
    <citation type="journal article" date="2010" name="Genome Biol.">
        <title>Structure and dynamics of the pan-genome of Streptococcus pneumoniae and closely related species.</title>
        <authorList>
            <person name="Donati C."/>
            <person name="Hiller N.L."/>
            <person name="Tettelin H."/>
            <person name="Muzzi A."/>
            <person name="Croucher N.J."/>
            <person name="Angiuoli S.V."/>
            <person name="Oggioni M."/>
            <person name="Dunning Hotopp J.C."/>
            <person name="Hu F.Z."/>
            <person name="Riley D.R."/>
            <person name="Covacci A."/>
            <person name="Mitchell T.J."/>
            <person name="Bentley S.D."/>
            <person name="Kilian M."/>
            <person name="Ehrlich G.D."/>
            <person name="Rappuoli R."/>
            <person name="Moxon E.R."/>
            <person name="Masignani V."/>
        </authorList>
    </citation>
    <scope>NUCLEOTIDE SEQUENCE [LARGE SCALE GENOMIC DNA]</scope>
    <source>
        <strain>Hungary19A-6</strain>
    </source>
</reference>
<comment type="function">
    <text evidence="1">Catalyzes the reversible isomerization of glucose-6-phosphate to fructose-6-phosphate.</text>
</comment>
<comment type="catalytic activity">
    <reaction evidence="1">
        <text>alpha-D-glucose 6-phosphate = beta-D-fructose 6-phosphate</text>
        <dbReference type="Rhea" id="RHEA:11816"/>
        <dbReference type="ChEBI" id="CHEBI:57634"/>
        <dbReference type="ChEBI" id="CHEBI:58225"/>
        <dbReference type="EC" id="5.3.1.9"/>
    </reaction>
</comment>
<comment type="pathway">
    <text evidence="1">Carbohydrate biosynthesis; gluconeogenesis.</text>
</comment>
<comment type="pathway">
    <text evidence="1">Carbohydrate degradation; glycolysis; D-glyceraldehyde 3-phosphate and glycerone phosphate from D-glucose: step 2/4.</text>
</comment>
<comment type="subcellular location">
    <subcellularLocation>
        <location evidence="1">Cytoplasm</location>
    </subcellularLocation>
</comment>
<comment type="similarity">
    <text evidence="1">Belongs to the GPI family.</text>
</comment>
<evidence type="ECO:0000255" key="1">
    <source>
        <dbReference type="HAMAP-Rule" id="MF_00473"/>
    </source>
</evidence>
<accession>B1I9D8</accession>
<dbReference type="EC" id="5.3.1.9" evidence="1"/>
<dbReference type="EMBL" id="CP000936">
    <property type="protein sequence ID" value="ACA36198.1"/>
    <property type="molecule type" value="Genomic_DNA"/>
</dbReference>
<dbReference type="RefSeq" id="WP_000018262.1">
    <property type="nucleotide sequence ID" value="NC_010380.1"/>
</dbReference>
<dbReference type="SMR" id="B1I9D8"/>
<dbReference type="KEGG" id="spv:SPH_2257"/>
<dbReference type="HOGENOM" id="CLU_037303_0_1_9"/>
<dbReference type="UniPathway" id="UPA00109">
    <property type="reaction ID" value="UER00181"/>
</dbReference>
<dbReference type="UniPathway" id="UPA00138"/>
<dbReference type="Proteomes" id="UP000002163">
    <property type="component" value="Chromosome"/>
</dbReference>
<dbReference type="GO" id="GO:0005829">
    <property type="term" value="C:cytosol"/>
    <property type="evidence" value="ECO:0007669"/>
    <property type="project" value="TreeGrafter"/>
</dbReference>
<dbReference type="GO" id="GO:0097367">
    <property type="term" value="F:carbohydrate derivative binding"/>
    <property type="evidence" value="ECO:0007669"/>
    <property type="project" value="InterPro"/>
</dbReference>
<dbReference type="GO" id="GO:0004347">
    <property type="term" value="F:glucose-6-phosphate isomerase activity"/>
    <property type="evidence" value="ECO:0007669"/>
    <property type="project" value="UniProtKB-UniRule"/>
</dbReference>
<dbReference type="GO" id="GO:0048029">
    <property type="term" value="F:monosaccharide binding"/>
    <property type="evidence" value="ECO:0007669"/>
    <property type="project" value="TreeGrafter"/>
</dbReference>
<dbReference type="GO" id="GO:0006094">
    <property type="term" value="P:gluconeogenesis"/>
    <property type="evidence" value="ECO:0007669"/>
    <property type="project" value="UniProtKB-UniRule"/>
</dbReference>
<dbReference type="GO" id="GO:0051156">
    <property type="term" value="P:glucose 6-phosphate metabolic process"/>
    <property type="evidence" value="ECO:0007669"/>
    <property type="project" value="TreeGrafter"/>
</dbReference>
<dbReference type="GO" id="GO:0006096">
    <property type="term" value="P:glycolytic process"/>
    <property type="evidence" value="ECO:0007669"/>
    <property type="project" value="UniProtKB-UniRule"/>
</dbReference>
<dbReference type="CDD" id="cd05015">
    <property type="entry name" value="SIS_PGI_1"/>
    <property type="match status" value="1"/>
</dbReference>
<dbReference type="CDD" id="cd05016">
    <property type="entry name" value="SIS_PGI_2"/>
    <property type="match status" value="1"/>
</dbReference>
<dbReference type="FunFam" id="3.40.50.10490:FF:000015">
    <property type="entry name" value="Glucose-6-phosphate isomerase"/>
    <property type="match status" value="1"/>
</dbReference>
<dbReference type="FunFam" id="3.40.50.10490:FF:000016">
    <property type="entry name" value="Glucose-6-phosphate isomerase"/>
    <property type="match status" value="1"/>
</dbReference>
<dbReference type="Gene3D" id="3.40.50.10490">
    <property type="entry name" value="Glucose-6-phosphate isomerase like protein, domain 1"/>
    <property type="match status" value="3"/>
</dbReference>
<dbReference type="HAMAP" id="MF_00473">
    <property type="entry name" value="G6P_isomerase"/>
    <property type="match status" value="1"/>
</dbReference>
<dbReference type="InterPro" id="IPR001672">
    <property type="entry name" value="G6P_Isomerase"/>
</dbReference>
<dbReference type="InterPro" id="IPR018189">
    <property type="entry name" value="Phosphoglucose_isomerase_CS"/>
</dbReference>
<dbReference type="InterPro" id="IPR046348">
    <property type="entry name" value="SIS_dom_sf"/>
</dbReference>
<dbReference type="InterPro" id="IPR035476">
    <property type="entry name" value="SIS_PGI_1"/>
</dbReference>
<dbReference type="InterPro" id="IPR035482">
    <property type="entry name" value="SIS_PGI_2"/>
</dbReference>
<dbReference type="NCBIfam" id="NF010697">
    <property type="entry name" value="PRK14097.1"/>
    <property type="match status" value="1"/>
</dbReference>
<dbReference type="PANTHER" id="PTHR11469">
    <property type="entry name" value="GLUCOSE-6-PHOSPHATE ISOMERASE"/>
    <property type="match status" value="1"/>
</dbReference>
<dbReference type="PANTHER" id="PTHR11469:SF1">
    <property type="entry name" value="GLUCOSE-6-PHOSPHATE ISOMERASE"/>
    <property type="match status" value="1"/>
</dbReference>
<dbReference type="Pfam" id="PF00342">
    <property type="entry name" value="PGI"/>
    <property type="match status" value="1"/>
</dbReference>
<dbReference type="PRINTS" id="PR00662">
    <property type="entry name" value="G6PISOMERASE"/>
</dbReference>
<dbReference type="SUPFAM" id="SSF53697">
    <property type="entry name" value="SIS domain"/>
    <property type="match status" value="1"/>
</dbReference>
<dbReference type="PROSITE" id="PS00765">
    <property type="entry name" value="P_GLUCOSE_ISOMERASE_1"/>
    <property type="match status" value="1"/>
</dbReference>
<dbReference type="PROSITE" id="PS00174">
    <property type="entry name" value="P_GLUCOSE_ISOMERASE_2"/>
    <property type="match status" value="1"/>
</dbReference>
<dbReference type="PROSITE" id="PS51463">
    <property type="entry name" value="P_GLUCOSE_ISOMERASE_3"/>
    <property type="match status" value="1"/>
</dbReference>